<sequence length="350" mass="38793">MTVSPVALRRKTECKPHPTARYWKKCDVEALFGLPFLDLIYQAAEIHRQNFNPREIQLSTLLSIKTGGCPEDCAYCPQSAHHNTNLGKEQMMDVDEIVEKAKIAKSRGASRFCMGAAWRGPKPKDVETVSAIIKAVKGLGMETCGTFGMLEEGMAEDLKEAGLDYYNHNLDTDPDRYNDIIHTRQHEDRMDTLGKVRNAGLKVCCGGIVGMNETRAERAGLIASLANLDPQPESVPINRLVKVEGTPLADAEDLDWTEFVRTIAVARITMPQSYVRLSAGRSNMPEAMQAMCFMAGANSIFYGDKLLTTGNPDEDGDRILMEKLNLYPLQFEPEGEVAEVEKASGIKVDY</sequence>
<name>BIOB_NEIMB</name>
<comment type="function">
    <text evidence="1">Catalyzes the conversion of dethiobiotin (DTB) to biotin by the insertion of a sulfur atom into dethiobiotin via a radical-based mechanism.</text>
</comment>
<comment type="catalytic activity">
    <reaction evidence="1">
        <text>(4R,5S)-dethiobiotin + (sulfur carrier)-SH + 2 reduced [2Fe-2S]-[ferredoxin] + 2 S-adenosyl-L-methionine = (sulfur carrier)-H + biotin + 2 5'-deoxyadenosine + 2 L-methionine + 2 oxidized [2Fe-2S]-[ferredoxin]</text>
        <dbReference type="Rhea" id="RHEA:22060"/>
        <dbReference type="Rhea" id="RHEA-COMP:10000"/>
        <dbReference type="Rhea" id="RHEA-COMP:10001"/>
        <dbReference type="Rhea" id="RHEA-COMP:14737"/>
        <dbReference type="Rhea" id="RHEA-COMP:14739"/>
        <dbReference type="ChEBI" id="CHEBI:17319"/>
        <dbReference type="ChEBI" id="CHEBI:29917"/>
        <dbReference type="ChEBI" id="CHEBI:33737"/>
        <dbReference type="ChEBI" id="CHEBI:33738"/>
        <dbReference type="ChEBI" id="CHEBI:57586"/>
        <dbReference type="ChEBI" id="CHEBI:57844"/>
        <dbReference type="ChEBI" id="CHEBI:59789"/>
        <dbReference type="ChEBI" id="CHEBI:64428"/>
        <dbReference type="ChEBI" id="CHEBI:149473"/>
        <dbReference type="EC" id="2.8.1.6"/>
    </reaction>
</comment>
<comment type="cofactor">
    <cofactor evidence="1">
        <name>[4Fe-4S] cluster</name>
        <dbReference type="ChEBI" id="CHEBI:49883"/>
    </cofactor>
    <text evidence="1">Binds 1 [4Fe-4S] cluster. The cluster is coordinated with 3 cysteines and an exchangeable S-adenosyl-L-methionine.</text>
</comment>
<comment type="cofactor">
    <cofactor evidence="1">
        <name>[2Fe-2S] cluster</name>
        <dbReference type="ChEBI" id="CHEBI:190135"/>
    </cofactor>
    <text evidence="1">Binds 1 [2Fe-2S] cluster. The cluster is coordinated with 3 cysteines and 1 arginine.</text>
</comment>
<comment type="pathway">
    <text evidence="1">Cofactor biosynthesis; biotin biosynthesis; biotin from 7,8-diaminononanoate: step 2/2.</text>
</comment>
<comment type="subunit">
    <text evidence="1">Homodimer.</text>
</comment>
<comment type="similarity">
    <text evidence="1">Belongs to the radical SAM superfamily. Biotin synthase family.</text>
</comment>
<feature type="chain" id="PRO_0000381497" description="Biotin synthase">
    <location>
        <begin position="1"/>
        <end position="350"/>
    </location>
</feature>
<feature type="domain" description="Radical SAM core" evidence="2">
    <location>
        <begin position="54"/>
        <end position="278"/>
    </location>
</feature>
<feature type="binding site" evidence="1">
    <location>
        <position position="69"/>
    </location>
    <ligand>
        <name>[4Fe-4S] cluster</name>
        <dbReference type="ChEBI" id="CHEBI:49883"/>
        <note>4Fe-4S-S-AdoMet</note>
    </ligand>
</feature>
<feature type="binding site" evidence="1">
    <location>
        <position position="73"/>
    </location>
    <ligand>
        <name>[4Fe-4S] cluster</name>
        <dbReference type="ChEBI" id="CHEBI:49883"/>
        <note>4Fe-4S-S-AdoMet</note>
    </ligand>
</feature>
<feature type="binding site" evidence="1">
    <location>
        <position position="76"/>
    </location>
    <ligand>
        <name>[4Fe-4S] cluster</name>
        <dbReference type="ChEBI" id="CHEBI:49883"/>
        <note>4Fe-4S-S-AdoMet</note>
    </ligand>
</feature>
<feature type="binding site" evidence="1">
    <location>
        <position position="113"/>
    </location>
    <ligand>
        <name>[2Fe-2S] cluster</name>
        <dbReference type="ChEBI" id="CHEBI:190135"/>
    </ligand>
</feature>
<feature type="binding site" evidence="1">
    <location>
        <position position="144"/>
    </location>
    <ligand>
        <name>[2Fe-2S] cluster</name>
        <dbReference type="ChEBI" id="CHEBI:190135"/>
    </ligand>
</feature>
<feature type="binding site" evidence="1">
    <location>
        <position position="204"/>
    </location>
    <ligand>
        <name>[2Fe-2S] cluster</name>
        <dbReference type="ChEBI" id="CHEBI:190135"/>
    </ligand>
</feature>
<feature type="binding site" evidence="1">
    <location>
        <position position="276"/>
    </location>
    <ligand>
        <name>[2Fe-2S] cluster</name>
        <dbReference type="ChEBI" id="CHEBI:190135"/>
    </ligand>
</feature>
<reference key="1">
    <citation type="journal article" date="2000" name="Science">
        <title>Complete genome sequence of Neisseria meningitidis serogroup B strain MC58.</title>
        <authorList>
            <person name="Tettelin H."/>
            <person name="Saunders N.J."/>
            <person name="Heidelberg J.F."/>
            <person name="Jeffries A.C."/>
            <person name="Nelson K.E."/>
            <person name="Eisen J.A."/>
            <person name="Ketchum K.A."/>
            <person name="Hood D.W."/>
            <person name="Peden J.F."/>
            <person name="Dodson R.J."/>
            <person name="Nelson W.C."/>
            <person name="Gwinn M.L."/>
            <person name="DeBoy R.T."/>
            <person name="Peterson J.D."/>
            <person name="Hickey E.K."/>
            <person name="Haft D.H."/>
            <person name="Salzberg S.L."/>
            <person name="White O."/>
            <person name="Fleischmann R.D."/>
            <person name="Dougherty B.A."/>
            <person name="Mason T.M."/>
            <person name="Ciecko A."/>
            <person name="Parksey D.S."/>
            <person name="Blair E."/>
            <person name="Cittone H."/>
            <person name="Clark E.B."/>
            <person name="Cotton M.D."/>
            <person name="Utterback T.R."/>
            <person name="Khouri H.M."/>
            <person name="Qin H."/>
            <person name="Vamathevan J.J."/>
            <person name="Gill J."/>
            <person name="Scarlato V."/>
            <person name="Masignani V."/>
            <person name="Pizza M."/>
            <person name="Grandi G."/>
            <person name="Sun L."/>
            <person name="Smith H.O."/>
            <person name="Fraser C.M."/>
            <person name="Moxon E.R."/>
            <person name="Rappuoli R."/>
            <person name="Venter J.C."/>
        </authorList>
    </citation>
    <scope>NUCLEOTIDE SEQUENCE [LARGE SCALE GENOMIC DNA]</scope>
    <source>
        <strain>ATCC BAA-335 / MC58</strain>
    </source>
</reference>
<protein>
    <recommendedName>
        <fullName evidence="1">Biotin synthase</fullName>
        <ecNumber evidence="1">2.8.1.6</ecNumber>
    </recommendedName>
</protein>
<accession>Q9JRW7</accession>
<evidence type="ECO:0000255" key="1">
    <source>
        <dbReference type="HAMAP-Rule" id="MF_01694"/>
    </source>
</evidence>
<evidence type="ECO:0000255" key="2">
    <source>
        <dbReference type="PROSITE-ProRule" id="PRU01266"/>
    </source>
</evidence>
<dbReference type="EC" id="2.8.1.6" evidence="1"/>
<dbReference type="EMBL" id="AE002098">
    <property type="protein sequence ID" value="AAF41533.1"/>
    <property type="molecule type" value="Genomic_DNA"/>
</dbReference>
<dbReference type="EMBL" id="AE002098">
    <property type="protein sequence ID" value="AAF41568.1"/>
    <property type="molecule type" value="Genomic_DNA"/>
</dbReference>
<dbReference type="PIR" id="A81117">
    <property type="entry name" value="A81117"/>
</dbReference>
<dbReference type="RefSeq" id="NP_274174.1">
    <property type="nucleotide sequence ID" value="NC_003112.2"/>
</dbReference>
<dbReference type="RefSeq" id="NP_274210.1">
    <property type="nucleotide sequence ID" value="NC_003112.2"/>
</dbReference>
<dbReference type="SMR" id="Q9JRW7"/>
<dbReference type="FunCoup" id="Q9JRW7">
    <property type="interactions" value="347"/>
</dbReference>
<dbReference type="STRING" id="122586.NMB1146"/>
<dbReference type="PaxDb" id="122586-NMB1146"/>
<dbReference type="KEGG" id="nme:NMB1146"/>
<dbReference type="KEGG" id="nme:NMB1184"/>
<dbReference type="PATRIC" id="fig|122586.8.peg.1450"/>
<dbReference type="HOGENOM" id="CLU_033172_1_2_4"/>
<dbReference type="InParanoid" id="Q9JRW7"/>
<dbReference type="OrthoDB" id="9786826at2"/>
<dbReference type="UniPathway" id="UPA00078">
    <property type="reaction ID" value="UER00162"/>
</dbReference>
<dbReference type="Proteomes" id="UP000000425">
    <property type="component" value="Chromosome"/>
</dbReference>
<dbReference type="GO" id="GO:0051537">
    <property type="term" value="F:2 iron, 2 sulfur cluster binding"/>
    <property type="evidence" value="ECO:0000318"/>
    <property type="project" value="GO_Central"/>
</dbReference>
<dbReference type="GO" id="GO:0051539">
    <property type="term" value="F:4 iron, 4 sulfur cluster binding"/>
    <property type="evidence" value="ECO:0007669"/>
    <property type="project" value="UniProtKB-KW"/>
</dbReference>
<dbReference type="GO" id="GO:0004076">
    <property type="term" value="F:biotin synthase activity"/>
    <property type="evidence" value="ECO:0000318"/>
    <property type="project" value="GO_Central"/>
</dbReference>
<dbReference type="GO" id="GO:0005506">
    <property type="term" value="F:iron ion binding"/>
    <property type="evidence" value="ECO:0007669"/>
    <property type="project" value="UniProtKB-UniRule"/>
</dbReference>
<dbReference type="GO" id="GO:0009102">
    <property type="term" value="P:biotin biosynthetic process"/>
    <property type="evidence" value="ECO:0000318"/>
    <property type="project" value="GO_Central"/>
</dbReference>
<dbReference type="CDD" id="cd01335">
    <property type="entry name" value="Radical_SAM"/>
    <property type="match status" value="1"/>
</dbReference>
<dbReference type="FunFam" id="3.20.20.70:FF:000011">
    <property type="entry name" value="Biotin synthase"/>
    <property type="match status" value="1"/>
</dbReference>
<dbReference type="Gene3D" id="3.20.20.70">
    <property type="entry name" value="Aldolase class I"/>
    <property type="match status" value="1"/>
</dbReference>
<dbReference type="HAMAP" id="MF_01694">
    <property type="entry name" value="BioB"/>
    <property type="match status" value="1"/>
</dbReference>
<dbReference type="InterPro" id="IPR013785">
    <property type="entry name" value="Aldolase_TIM"/>
</dbReference>
<dbReference type="InterPro" id="IPR010722">
    <property type="entry name" value="BATS_dom"/>
</dbReference>
<dbReference type="InterPro" id="IPR002684">
    <property type="entry name" value="Biotin_synth/BioAB"/>
</dbReference>
<dbReference type="InterPro" id="IPR024177">
    <property type="entry name" value="Biotin_synthase"/>
</dbReference>
<dbReference type="InterPro" id="IPR006638">
    <property type="entry name" value="Elp3/MiaA/NifB-like_rSAM"/>
</dbReference>
<dbReference type="InterPro" id="IPR007197">
    <property type="entry name" value="rSAM"/>
</dbReference>
<dbReference type="NCBIfam" id="TIGR00433">
    <property type="entry name" value="bioB"/>
    <property type="match status" value="1"/>
</dbReference>
<dbReference type="PANTHER" id="PTHR22976">
    <property type="entry name" value="BIOTIN SYNTHASE"/>
    <property type="match status" value="1"/>
</dbReference>
<dbReference type="PANTHER" id="PTHR22976:SF2">
    <property type="entry name" value="BIOTIN SYNTHASE, MITOCHONDRIAL"/>
    <property type="match status" value="1"/>
</dbReference>
<dbReference type="Pfam" id="PF06968">
    <property type="entry name" value="BATS"/>
    <property type="match status" value="1"/>
</dbReference>
<dbReference type="Pfam" id="PF04055">
    <property type="entry name" value="Radical_SAM"/>
    <property type="match status" value="1"/>
</dbReference>
<dbReference type="PIRSF" id="PIRSF001619">
    <property type="entry name" value="Biotin_synth"/>
    <property type="match status" value="1"/>
</dbReference>
<dbReference type="SFLD" id="SFLDF00272">
    <property type="entry name" value="biotin_synthase"/>
    <property type="match status" value="1"/>
</dbReference>
<dbReference type="SFLD" id="SFLDS00029">
    <property type="entry name" value="Radical_SAM"/>
    <property type="match status" value="1"/>
</dbReference>
<dbReference type="SMART" id="SM00876">
    <property type="entry name" value="BATS"/>
    <property type="match status" value="1"/>
</dbReference>
<dbReference type="SMART" id="SM00729">
    <property type="entry name" value="Elp3"/>
    <property type="match status" value="1"/>
</dbReference>
<dbReference type="SUPFAM" id="SSF102114">
    <property type="entry name" value="Radical SAM enzymes"/>
    <property type="match status" value="1"/>
</dbReference>
<dbReference type="PROSITE" id="PS51918">
    <property type="entry name" value="RADICAL_SAM"/>
    <property type="match status" value="1"/>
</dbReference>
<gene>
    <name evidence="1" type="primary">bioB1</name>
    <name type="ordered locus">NMB1146</name>
</gene>
<gene>
    <name evidence="1" type="primary">bioB2</name>
    <name type="ordered locus">NMB1184</name>
</gene>
<organism>
    <name type="scientific">Neisseria meningitidis serogroup B (strain ATCC BAA-335 / MC58)</name>
    <dbReference type="NCBI Taxonomy" id="122586"/>
    <lineage>
        <taxon>Bacteria</taxon>
        <taxon>Pseudomonadati</taxon>
        <taxon>Pseudomonadota</taxon>
        <taxon>Betaproteobacteria</taxon>
        <taxon>Neisseriales</taxon>
        <taxon>Neisseriaceae</taxon>
        <taxon>Neisseria</taxon>
    </lineage>
</organism>
<proteinExistence type="inferred from homology"/>
<keyword id="KW-0001">2Fe-2S</keyword>
<keyword id="KW-0004">4Fe-4S</keyword>
<keyword id="KW-0093">Biotin biosynthesis</keyword>
<keyword id="KW-0408">Iron</keyword>
<keyword id="KW-0411">Iron-sulfur</keyword>
<keyword id="KW-0479">Metal-binding</keyword>
<keyword id="KW-1185">Reference proteome</keyword>
<keyword id="KW-0949">S-adenosyl-L-methionine</keyword>
<keyword id="KW-0808">Transferase</keyword>